<organism>
    <name type="scientific">Oryctolagus cuniculus</name>
    <name type="common">Rabbit</name>
    <dbReference type="NCBI Taxonomy" id="9986"/>
    <lineage>
        <taxon>Eukaryota</taxon>
        <taxon>Metazoa</taxon>
        <taxon>Chordata</taxon>
        <taxon>Craniata</taxon>
        <taxon>Vertebrata</taxon>
        <taxon>Euteleostomi</taxon>
        <taxon>Mammalia</taxon>
        <taxon>Eutheria</taxon>
        <taxon>Euarchontoglires</taxon>
        <taxon>Glires</taxon>
        <taxon>Lagomorpha</taxon>
        <taxon>Leporidae</taxon>
        <taxon>Oryctolagus</taxon>
    </lineage>
</organism>
<proteinExistence type="evidence at transcript level"/>
<reference key="1">
    <citation type="journal article" date="2002" name="J. Androl.">
        <title>The Kv2.2 alpha subunit contributes to delayed rectifier K(+) currents in myocytes from rabbit corpus cavernosum.</title>
        <authorList>
            <person name="Malysz J."/>
            <person name="Farrugia G."/>
            <person name="Ou Y."/>
            <person name="Szurszewski J.H."/>
            <person name="Nehra A."/>
            <person name="Gibbons S.J."/>
        </authorList>
    </citation>
    <scope>NUCLEOTIDE SEQUENCE [MRNA]</scope>
</reference>
<reference key="2">
    <citation type="journal article" date="1999" name="Ann. N. Y. Acad. Sci.">
        <title>Molecular diversity of K+ channels.</title>
        <authorList>
            <person name="Coetzee W.A."/>
            <person name="Amarillo Y."/>
            <person name="Chiu J."/>
            <person name="Chow A."/>
            <person name="Lau D."/>
            <person name="McCormack T."/>
            <person name="Moreno H."/>
            <person name="Nadal M.S."/>
            <person name="Ozaita A."/>
            <person name="Pountney D."/>
            <person name="Saganich M."/>
            <person name="Vega-Saenz de Miera E."/>
            <person name="Rudy B."/>
        </authorList>
    </citation>
    <scope>REVIEW</scope>
</reference>
<name>KCNB2_RABIT</name>
<protein>
    <recommendedName>
        <fullName evidence="4">Potassium voltage-gated channel subfamily B member 2</fullName>
    </recommendedName>
    <alternativeName>
        <fullName>Voltage-gated potassium channel subunit Kv2.2</fullName>
    </alternativeName>
</protein>
<sequence>MAEKAPPGLNRKTSRSTLSLPPEPVDIIKSKTCSRRVKINVGGLNHEVLWRTLDRLPRTRLGKLRDCNTHESLLEVCDDYNLGDNEYFFDRHPGAFTSILNFYRTGKLHMMEEMCALSFGQELDYWGIDEIYLESCCQARYHQKKEQMNEELRREAETMREREGEEFDNTCCPEKRKKLWDLLEKPNSSVAAKILAIVSILFIVLSTIALSLNTLPELQETDEFGQPSDNPKLAHVEAVCIAWFTMEYLLRFLSSPNKWKFFKGPLNVIDLLAILPYYVTIFLTESNKSVLQFQNVRRVVQIFRIMRILRILKLARHSTGLQSLGFTLRRSYNELGLLILFLAMGIMIFSSLVFFAEKDEDATKFTSIPASFWWATITMTTVGYGDIYPKTLLGKIVGGLCCIAGVLVIALPIPIIVNNFSEFYKEQKRQEKAIKRREALERAKRNGSIVSMNLKDAFARSMELIDVAVEKAGETANTKDSADDNHLSPSRWKWARKALSESSSNKSYENKYQEVSQKDSHEQLNNTSSSSPQHLSAQKLEMLYNEITKTQPHSHQAPDCQEQPERPSAYEEEIEMEEVVCPQEQLAVAQTEVIVDMKSTSSIDSFTSCATDFTETERSPLPPPSASHLHMKFPTDFPGTEEHQRARGPPFLTLTREKGPAAREGALEYSPIDITVNLDAGSSQCGLHGPLQSDSATDSPKSSLKGSNPLKSRSLKVNFKENRGSAPQTPPSTARPLPVTTADFSLSTPQHISTILLEESPAQGDRLLLDAELPAQCQGLAKGLSPRFPKQKLFAFSSRERRSFTEIDTGEDEDFLELQGARADKQADSSPNCFAEKPSDARHPLSEEGCGGSSSPPNTGHNCRQDSFHAVGEVQKDSSQEGYKMENHLFAPEIHSNPGDTGYCPTRETSM</sequence>
<gene>
    <name evidence="4" type="primary">KCNB2</name>
</gene>
<dbReference type="EMBL" id="AY037947">
    <property type="protein sequence ID" value="AAK84954.1"/>
    <property type="molecule type" value="mRNA"/>
</dbReference>
<dbReference type="RefSeq" id="NP_001075606.1">
    <property type="nucleotide sequence ID" value="NM_001082137.1"/>
</dbReference>
<dbReference type="SMR" id="Q95L11"/>
<dbReference type="FunCoup" id="Q95L11">
    <property type="interactions" value="38"/>
</dbReference>
<dbReference type="STRING" id="9986.ENSOCUP00000002420"/>
<dbReference type="GlyCosmos" id="Q95L11">
    <property type="glycosylation" value="1 site, No reported glycans"/>
</dbReference>
<dbReference type="PaxDb" id="9986-ENSOCUP00000002420"/>
<dbReference type="GeneID" id="100008877"/>
<dbReference type="KEGG" id="ocu:100008877"/>
<dbReference type="CTD" id="9312"/>
<dbReference type="eggNOG" id="KOG3713">
    <property type="taxonomic scope" value="Eukaryota"/>
</dbReference>
<dbReference type="InParanoid" id="Q95L11"/>
<dbReference type="OrthoDB" id="296522at2759"/>
<dbReference type="Proteomes" id="UP000001811">
    <property type="component" value="Unplaced"/>
</dbReference>
<dbReference type="GO" id="GO:0030425">
    <property type="term" value="C:dendrite"/>
    <property type="evidence" value="ECO:0000250"/>
    <property type="project" value="UniProtKB"/>
</dbReference>
<dbReference type="GO" id="GO:0032809">
    <property type="term" value="C:neuronal cell body membrane"/>
    <property type="evidence" value="ECO:0000250"/>
    <property type="project" value="UniProtKB"/>
</dbReference>
<dbReference type="GO" id="GO:0043204">
    <property type="term" value="C:perikaryon"/>
    <property type="evidence" value="ECO:0007669"/>
    <property type="project" value="UniProtKB-SubCell"/>
</dbReference>
<dbReference type="GO" id="GO:0005886">
    <property type="term" value="C:plasma membrane"/>
    <property type="evidence" value="ECO:0000250"/>
    <property type="project" value="UniProtKB"/>
</dbReference>
<dbReference type="GO" id="GO:0008076">
    <property type="term" value="C:voltage-gated potassium channel complex"/>
    <property type="evidence" value="ECO:0000250"/>
    <property type="project" value="UniProtKB"/>
</dbReference>
<dbReference type="GO" id="GO:0005251">
    <property type="term" value="F:delayed rectifier potassium channel activity"/>
    <property type="evidence" value="ECO:0000250"/>
    <property type="project" value="UniProtKB"/>
</dbReference>
<dbReference type="GO" id="GO:0046982">
    <property type="term" value="F:protein heterodimerization activity"/>
    <property type="evidence" value="ECO:0000250"/>
    <property type="project" value="UniProtKB"/>
</dbReference>
<dbReference type="GO" id="GO:0001508">
    <property type="term" value="P:action potential"/>
    <property type="evidence" value="ECO:0007669"/>
    <property type="project" value="TreeGrafter"/>
</dbReference>
<dbReference type="GO" id="GO:0071805">
    <property type="term" value="P:potassium ion transmembrane transport"/>
    <property type="evidence" value="ECO:0000250"/>
    <property type="project" value="UniProtKB"/>
</dbReference>
<dbReference type="GO" id="GO:0006813">
    <property type="term" value="P:potassium ion transport"/>
    <property type="evidence" value="ECO:0000250"/>
    <property type="project" value="UniProtKB"/>
</dbReference>
<dbReference type="GO" id="GO:0051260">
    <property type="term" value="P:protein homooligomerization"/>
    <property type="evidence" value="ECO:0007669"/>
    <property type="project" value="InterPro"/>
</dbReference>
<dbReference type="GO" id="GO:0072659">
    <property type="term" value="P:protein localization to plasma membrane"/>
    <property type="evidence" value="ECO:0000250"/>
    <property type="project" value="UniProtKB"/>
</dbReference>
<dbReference type="CDD" id="cd18412">
    <property type="entry name" value="BTB_POZ_KCNB2"/>
    <property type="match status" value="1"/>
</dbReference>
<dbReference type="FunFam" id="1.10.287.70:FF:000034">
    <property type="entry name" value="Potassium voltage-gated channel subfamily B member"/>
    <property type="match status" value="1"/>
</dbReference>
<dbReference type="FunFam" id="1.20.120.350:FF:000018">
    <property type="entry name" value="Potassium voltage-gated channel subfamily B member"/>
    <property type="match status" value="1"/>
</dbReference>
<dbReference type="FunFam" id="3.30.710.10:FF:000010">
    <property type="entry name" value="Potassium voltage-gated channel subfamily B member"/>
    <property type="match status" value="1"/>
</dbReference>
<dbReference type="Gene3D" id="1.10.287.70">
    <property type="match status" value="1"/>
</dbReference>
<dbReference type="Gene3D" id="3.30.710.10">
    <property type="entry name" value="Potassium Channel Kv1.1, Chain A"/>
    <property type="match status" value="1"/>
</dbReference>
<dbReference type="Gene3D" id="1.20.120.350">
    <property type="entry name" value="Voltage-gated potassium channels. Chain C"/>
    <property type="match status" value="1"/>
</dbReference>
<dbReference type="InterPro" id="IPR000210">
    <property type="entry name" value="BTB/POZ_dom"/>
</dbReference>
<dbReference type="InterPro" id="IPR005821">
    <property type="entry name" value="Ion_trans_dom"/>
</dbReference>
<dbReference type="InterPro" id="IPR003968">
    <property type="entry name" value="K_chnl_volt-dep_Kv"/>
</dbReference>
<dbReference type="InterPro" id="IPR003973">
    <property type="entry name" value="K_chnl_volt-dep_Kv2"/>
</dbReference>
<dbReference type="InterPro" id="IPR005826">
    <property type="entry name" value="K_chnl_volt-dep_Kv2.2"/>
</dbReference>
<dbReference type="InterPro" id="IPR011333">
    <property type="entry name" value="SKP1/BTB/POZ_sf"/>
</dbReference>
<dbReference type="InterPro" id="IPR003131">
    <property type="entry name" value="T1-type_BTB"/>
</dbReference>
<dbReference type="InterPro" id="IPR028325">
    <property type="entry name" value="VG_K_chnl"/>
</dbReference>
<dbReference type="InterPro" id="IPR027359">
    <property type="entry name" value="Volt_channel_dom_sf"/>
</dbReference>
<dbReference type="PANTHER" id="PTHR11537:SF134">
    <property type="entry name" value="POTASSIUM VOLTAGE-GATED CHANNEL SUBFAMILY B MEMBER 2"/>
    <property type="match status" value="1"/>
</dbReference>
<dbReference type="PANTHER" id="PTHR11537">
    <property type="entry name" value="VOLTAGE-GATED POTASSIUM CHANNEL"/>
    <property type="match status" value="1"/>
</dbReference>
<dbReference type="Pfam" id="PF02214">
    <property type="entry name" value="BTB_2"/>
    <property type="match status" value="1"/>
</dbReference>
<dbReference type="Pfam" id="PF00520">
    <property type="entry name" value="Ion_trans"/>
    <property type="match status" value="1"/>
</dbReference>
<dbReference type="Pfam" id="PF03521">
    <property type="entry name" value="Kv2channel"/>
    <property type="match status" value="1"/>
</dbReference>
<dbReference type="PRINTS" id="PR00169">
    <property type="entry name" value="KCHANNEL"/>
</dbReference>
<dbReference type="PRINTS" id="PR01515">
    <property type="entry name" value="KV22CHANNEL"/>
</dbReference>
<dbReference type="PRINTS" id="PR01491">
    <property type="entry name" value="KVCHANNEL"/>
</dbReference>
<dbReference type="PRINTS" id="PR01495">
    <property type="entry name" value="SHABCHANNEL"/>
</dbReference>
<dbReference type="SMART" id="SM00225">
    <property type="entry name" value="BTB"/>
    <property type="match status" value="1"/>
</dbReference>
<dbReference type="SUPFAM" id="SSF54695">
    <property type="entry name" value="POZ domain"/>
    <property type="match status" value="1"/>
</dbReference>
<dbReference type="SUPFAM" id="SSF81324">
    <property type="entry name" value="Voltage-gated potassium channels"/>
    <property type="match status" value="1"/>
</dbReference>
<evidence type="ECO:0000250" key="1">
    <source>
        <dbReference type="UniProtKB" id="A6H8H5"/>
    </source>
</evidence>
<evidence type="ECO:0000250" key="2">
    <source>
        <dbReference type="UniProtKB" id="P63142"/>
    </source>
</evidence>
<evidence type="ECO:0000250" key="3">
    <source>
        <dbReference type="UniProtKB" id="Q63099"/>
    </source>
</evidence>
<evidence type="ECO:0000250" key="4">
    <source>
        <dbReference type="UniProtKB" id="Q92953"/>
    </source>
</evidence>
<evidence type="ECO:0000250" key="5">
    <source>
        <dbReference type="UniProtKB" id="Q95167"/>
    </source>
</evidence>
<evidence type="ECO:0000255" key="6"/>
<evidence type="ECO:0000256" key="7">
    <source>
        <dbReference type="SAM" id="MobiDB-lite"/>
    </source>
</evidence>
<evidence type="ECO:0000305" key="8"/>
<evidence type="ECO:0000305" key="9">
    <source>
    </source>
</evidence>
<feature type="chain" id="PRO_0000054049" description="Potassium voltage-gated channel subfamily B member 2">
    <location>
        <begin position="1"/>
        <end position="911"/>
    </location>
</feature>
<feature type="topological domain" description="Cytoplasmic" evidence="2">
    <location>
        <begin position="1"/>
        <end position="190"/>
    </location>
</feature>
<feature type="transmembrane region" description="Helical; Name=Segment S1" evidence="2">
    <location>
        <begin position="191"/>
        <end position="212"/>
    </location>
</feature>
<feature type="topological domain" description="Extracellular" evidence="2">
    <location>
        <begin position="213"/>
        <end position="232"/>
    </location>
</feature>
<feature type="transmembrane region" description="Helical; Name=Segment S2" evidence="2">
    <location>
        <begin position="233"/>
        <end position="254"/>
    </location>
</feature>
<feature type="topological domain" description="Cytoplasmic" evidence="2">
    <location>
        <begin position="255"/>
        <end position="265"/>
    </location>
</feature>
<feature type="transmembrane region" description="Helical; Name=Segment S3" evidence="2">
    <location>
        <begin position="266"/>
        <end position="284"/>
    </location>
</feature>
<feature type="topological domain" description="Extracellular" evidence="2">
    <location>
        <begin position="285"/>
        <end position="296"/>
    </location>
</feature>
<feature type="transmembrane region" description="Helical; Voltage-sensor; Name=Segment S4" evidence="2">
    <location>
        <begin position="297"/>
        <end position="317"/>
    </location>
</feature>
<feature type="topological domain" description="Cytoplasmic" evidence="2">
    <location>
        <begin position="318"/>
        <end position="332"/>
    </location>
</feature>
<feature type="transmembrane region" description="Helical; Name=Segment S5" evidence="2">
    <location>
        <begin position="333"/>
        <end position="354"/>
    </location>
</feature>
<feature type="topological domain" description="Extracellular" evidence="2">
    <location>
        <begin position="355"/>
        <end position="368"/>
    </location>
</feature>
<feature type="intramembrane region" description="Helical; Name=Pore helix" evidence="2">
    <location>
        <begin position="369"/>
        <end position="380"/>
    </location>
</feature>
<feature type="intramembrane region" evidence="2">
    <location>
        <begin position="381"/>
        <end position="388"/>
    </location>
</feature>
<feature type="topological domain" description="Extracellular" evidence="2">
    <location>
        <begin position="389"/>
        <end position="395"/>
    </location>
</feature>
<feature type="transmembrane region" description="Helical; Name=Segment S6" evidence="2">
    <location>
        <begin position="396"/>
        <end position="424"/>
    </location>
</feature>
<feature type="topological domain" description="Cytoplasmic" evidence="2">
    <location>
        <begin position="425"/>
        <end position="911"/>
    </location>
</feature>
<feature type="region of interest" description="Disordered" evidence="7">
    <location>
        <begin position="1"/>
        <end position="21"/>
    </location>
</feature>
<feature type="region of interest" description="Disordered" evidence="7">
    <location>
        <begin position="503"/>
        <end position="534"/>
    </location>
</feature>
<feature type="region of interest" description="Disordered" evidence="7">
    <location>
        <begin position="685"/>
        <end position="740"/>
    </location>
</feature>
<feature type="region of interest" description="Disordered" evidence="7">
    <location>
        <begin position="821"/>
        <end position="911"/>
    </location>
</feature>
<feature type="short sequence motif" description="Selectivity filter" evidence="2">
    <location>
        <begin position="381"/>
        <end position="386"/>
    </location>
</feature>
<feature type="short sequence motif" description="FFAT" evidence="4">
    <location>
        <begin position="605"/>
        <end position="611"/>
    </location>
</feature>
<feature type="compositionally biased region" description="Basic and acidic residues" evidence="7">
    <location>
        <begin position="508"/>
        <end position="522"/>
    </location>
</feature>
<feature type="compositionally biased region" description="Polar residues" evidence="7">
    <location>
        <begin position="523"/>
        <end position="534"/>
    </location>
</feature>
<feature type="compositionally biased region" description="Polar residues" evidence="7">
    <location>
        <begin position="692"/>
        <end position="711"/>
    </location>
</feature>
<feature type="compositionally biased region" description="Basic and acidic residues" evidence="7">
    <location>
        <begin position="837"/>
        <end position="846"/>
    </location>
</feature>
<feature type="compositionally biased region" description="Basic and acidic residues" evidence="7">
    <location>
        <begin position="874"/>
        <end position="887"/>
    </location>
</feature>
<feature type="modified residue" description="Phosphoserine" evidence="3">
    <location>
        <position position="448"/>
    </location>
</feature>
<feature type="modified residue" description="Phosphoserine" evidence="4">
    <location>
        <position position="608"/>
    </location>
</feature>
<feature type="glycosylation site" description="N-linked (GlcNAc...) asparagine" evidence="6">
    <location>
        <position position="287"/>
    </location>
</feature>
<keyword id="KW-1003">Cell membrane</keyword>
<keyword id="KW-0966">Cell projection</keyword>
<keyword id="KW-0325">Glycoprotein</keyword>
<keyword id="KW-0407">Ion channel</keyword>
<keyword id="KW-0406">Ion transport</keyword>
<keyword id="KW-0472">Membrane</keyword>
<keyword id="KW-0597">Phosphoprotein</keyword>
<keyword id="KW-0630">Potassium</keyword>
<keyword id="KW-0631">Potassium channel</keyword>
<keyword id="KW-0633">Potassium transport</keyword>
<keyword id="KW-1185">Reference proteome</keyword>
<keyword id="KW-0812">Transmembrane</keyword>
<keyword id="KW-1133">Transmembrane helix</keyword>
<keyword id="KW-0813">Transport</keyword>
<keyword id="KW-0851">Voltage-gated channel</keyword>
<comment type="function">
    <text evidence="1 3">Voltage-gated potassium channel that mediates transmembrane potassium transport in excitable membranes, primarily in the brain and smooth muscle cells. Channels open or close in response to the voltage difference across the membrane, letting potassium ions pass in accordance with their electrochemical gradient. Homotetrameric channels mediate a delayed-rectifier voltage-dependent outward potassium current that display rapid activation and slow inactivation in response to membrane depolarization. Can form functional homotetrameric and heterotetrameric channels that contain variable proportions of KCNB1; channel properties depend on the type of alpha subunits that are part of the channel. Can also form functional heterotetrameric channels with other alpha subunits that are non-conducting when expressed alone, such as KCNS1 and KCNS2, creating a functionally diverse range of channel complexes. In vivo, membranes probably contain a mixture of heteromeric potassium channel complexes, making it difficult to assign currents observed in intact tissues to any particular potassium channel family member. Contributes to the delayed-rectifier voltage-gated potassium current in cortical pyramidal neurons and smooth muscle cells.</text>
</comment>
<comment type="catalytic activity">
    <reaction evidence="3">
        <text>K(+)(in) = K(+)(out)</text>
        <dbReference type="Rhea" id="RHEA:29463"/>
        <dbReference type="ChEBI" id="CHEBI:29103"/>
    </reaction>
</comment>
<comment type="activity regulation">
    <text evidence="3 5 9">Inhibited by quinine at micromolar levels. Modestly sensitive to millimolar levels of tetraethylammonium (TEA) and 4-aminopyridine (4-AP).</text>
</comment>
<comment type="biophysicochemical properties">
    <kinetics>
        <text evidence="9">Homotetrameric channels expressed in xenopus oocytes or in mammalian non-neuronal cells display delayed-rectifier voltage-dependent potassium currents which are activated during membrane depolarization, i.e within a risetime of about 20 msec. After that, inactivate very slowly. Their activation requires low threshold potentials of about -20 to -30 mV, with a midpoint activation at about 10 mV. For inactivation, the voltage at half-maximal amplitude is about -30 mV. Channels have an unitary conductance of about 14 pS. The voltage-dependence of activation and inactivation and other channel characteristics vary depending on the experimental conditions, the expression system and post-translational modifications.</text>
    </kinetics>
</comment>
<comment type="subunit">
    <text evidence="3 4">Homotetramer or heterotetramer with KCNB1. Heterotetramer with KCNS1 and KCNS2 (By similarity). Interacts (via phosphorylated FFAT motif) with VAPA and VAPB (By similarity).</text>
</comment>
<comment type="subcellular location">
    <subcellularLocation>
        <location evidence="3">Cell membrane</location>
        <topology evidence="3">Multi-pass membrane protein</topology>
    </subcellularLocation>
    <subcellularLocation>
        <location evidence="3">Perikaryon</location>
    </subcellularLocation>
    <subcellularLocation>
        <location evidence="3">Cell projection</location>
        <location evidence="3">Dendrite</location>
    </subcellularLocation>
    <text evidence="3">Localized uniformly throughout cell bodies and dendrites. Colocalizes with KCNB1 to high-density somatodendritic clusters on cortical pyramidal neurons.</text>
</comment>
<comment type="domain">
    <text evidence="2">The transmembrane segment S4 functions as a voltage-sensor and is characterized by a series of positively charged amino acids at every third position. Channel opening and closing is effected by a conformation change that affects the position and orientation of the voltage-sensor paddle formed by S3 and S4 within the membrane. A transmembrane electric field that is positive inside would push the positively charged S4 segment outwards, thereby opening the pore, while a field that is negative inside would pull the S4 segment inwards and close the pore. Changes in the position and orientation of S4 are then transmitted to the activation gate formed by the inner helix bundle via the S4-S5 linker region.</text>
</comment>
<comment type="PTM">
    <text evidence="3 4">Phosphorylated (By similarity). Phosphorylation at Ser-608 of the FFAT motif activates interaction with MOSPD2, VAPA and VAPB (By similarity).</text>
</comment>
<comment type="similarity">
    <text evidence="8">Belongs to the potassium channel family. B (Shab) (TC 1.A.1.2) subfamily. Kv2.2/KCNB2 sub-subfamily.</text>
</comment>
<accession>Q95L11</accession>